<protein>
    <recommendedName>
        <fullName>Formamidopyrimidine-DNA glycosylase</fullName>
        <shortName>Fapy-DNA glycosylase</shortName>
        <ecNumber>3.2.2.23</ecNumber>
    </recommendedName>
    <alternativeName>
        <fullName>DNA-(apurinic or apyrimidinic site) lyase MutM</fullName>
        <shortName>AP lyase MutM</shortName>
        <ecNumber>4.2.99.18</ecNumber>
    </alternativeName>
</protein>
<accession>P74290</accession>
<accession>Q55328</accession>
<comment type="function">
    <text evidence="1">Involved in base excision repair of DNA damaged by oxidation or by mutagenic agents. Acts as a DNA glycosylase that recognizes and removes damaged bases. Has a preference for oxidized purines, such as 7,8-dihydro-8-oxoguanine (8-oxoG). Has AP (apurinic/apyrimidinic) lyase activity and introduces nicks in the DNA strand. Cleaves the DNA backbone by beta-delta elimination to generate a single-strand break at the site of the removed base with both 3'- and 5'-phosphates (By similarity).</text>
</comment>
<comment type="catalytic activity">
    <reaction>
        <text>Hydrolysis of DNA containing ring-opened 7-methylguanine residues, releasing 2,6-diamino-4-hydroxy-5-(N-methyl)formamidopyrimidine.</text>
        <dbReference type="EC" id="3.2.2.23"/>
    </reaction>
</comment>
<comment type="catalytic activity">
    <reaction>
        <text>2'-deoxyribonucleotide-(2'-deoxyribose 5'-phosphate)-2'-deoxyribonucleotide-DNA = a 3'-end 2'-deoxyribonucleotide-(2,3-dehydro-2,3-deoxyribose 5'-phosphate)-DNA + a 5'-end 5'-phospho-2'-deoxyribonucleoside-DNA + H(+)</text>
        <dbReference type="Rhea" id="RHEA:66592"/>
        <dbReference type="Rhea" id="RHEA-COMP:13180"/>
        <dbReference type="Rhea" id="RHEA-COMP:16897"/>
        <dbReference type="Rhea" id="RHEA-COMP:17067"/>
        <dbReference type="ChEBI" id="CHEBI:15378"/>
        <dbReference type="ChEBI" id="CHEBI:136412"/>
        <dbReference type="ChEBI" id="CHEBI:157695"/>
        <dbReference type="ChEBI" id="CHEBI:167181"/>
        <dbReference type="EC" id="4.2.99.18"/>
    </reaction>
</comment>
<comment type="cofactor">
    <cofactor evidence="1">
        <name>Zn(2+)</name>
        <dbReference type="ChEBI" id="CHEBI:29105"/>
    </cofactor>
    <text evidence="1">Binds 1 zinc ion per subunit.</text>
</comment>
<comment type="subunit">
    <text evidence="1">Monomer.</text>
</comment>
<comment type="similarity">
    <text evidence="2">Belongs to the FPG family.</text>
</comment>
<comment type="sequence caution" evidence="2">
    <conflict type="frameshift">
        <sequence resource="EMBL-CDS" id="AAA88630"/>
    </conflict>
</comment>
<sequence>MPELPEVETVCRGLNRLTLEQTIGGGEVLLDRSLAYPVSVEDFQKQITGCRLVGWQRRGKYLLGELRSNQAPGPAGWLGCHLRMTGQLLWTERDQQRPRHTRVVLHFEGGWELRFVDTRTFGKVWLLPGDRPWAEVMTGLGQLGPEPFGADFTAEYLYEKLKSSRRPLKNALLDQRLVAGLGNIYADEVLFFCGFHPTMASNQVSLQDCELIHQQIQATLTAAIEAGGTSFSDYRQVTGINGNYGGMAQVYGREGEPCRHCGTVIAKIKLGGRSAHFCPQCQPKLER</sequence>
<feature type="initiator methionine" description="Removed" evidence="1">
    <location>
        <position position="1"/>
    </location>
</feature>
<feature type="chain" id="PRO_0000170879" description="Formamidopyrimidine-DNA glycosylase">
    <location>
        <begin position="2"/>
        <end position="287"/>
    </location>
</feature>
<feature type="zinc finger region" description="FPG-type">
    <location>
        <begin position="249"/>
        <end position="283"/>
    </location>
</feature>
<feature type="active site" description="Schiff-base intermediate with DNA" evidence="1">
    <location>
        <position position="2"/>
    </location>
</feature>
<feature type="active site" description="Proton donor" evidence="1">
    <location>
        <position position="3"/>
    </location>
</feature>
<feature type="active site" description="Proton donor; for beta-elimination activity" evidence="1">
    <location>
        <position position="60"/>
    </location>
</feature>
<feature type="active site" description="Proton donor; for delta-elimination activity" evidence="1">
    <location>
        <position position="273"/>
    </location>
</feature>
<feature type="binding site" evidence="1">
    <location>
        <position position="100"/>
    </location>
    <ligand>
        <name>DNA</name>
        <dbReference type="ChEBI" id="CHEBI:16991"/>
    </ligand>
</feature>
<feature type="binding site" evidence="1">
    <location>
        <position position="119"/>
    </location>
    <ligand>
        <name>DNA</name>
        <dbReference type="ChEBI" id="CHEBI:16991"/>
    </ligand>
</feature>
<feature type="sequence conflict" description="In Ref. 2; AAA88630." evidence="2" ref="2">
    <original>GD</original>
    <variation>AI</variation>
    <location>
        <begin position="129"/>
        <end position="130"/>
    </location>
</feature>
<evidence type="ECO:0000250" key="1"/>
<evidence type="ECO:0000305" key="2"/>
<proteinExistence type="inferred from homology"/>
<name>FPG_SYNY3</name>
<keyword id="KW-0227">DNA damage</keyword>
<keyword id="KW-0234">DNA repair</keyword>
<keyword id="KW-0238">DNA-binding</keyword>
<keyword id="KW-0326">Glycosidase</keyword>
<keyword id="KW-0378">Hydrolase</keyword>
<keyword id="KW-0456">Lyase</keyword>
<keyword id="KW-0479">Metal-binding</keyword>
<keyword id="KW-0511">Multifunctional enzyme</keyword>
<keyword id="KW-1185">Reference proteome</keyword>
<keyword id="KW-0862">Zinc</keyword>
<keyword id="KW-0863">Zinc-finger</keyword>
<reference key="1">
    <citation type="journal article" date="1996" name="DNA Res.">
        <title>Sequence analysis of the genome of the unicellular cyanobacterium Synechocystis sp. strain PCC6803. II. Sequence determination of the entire genome and assignment of potential protein-coding regions.</title>
        <authorList>
            <person name="Kaneko T."/>
            <person name="Sato S."/>
            <person name="Kotani H."/>
            <person name="Tanaka A."/>
            <person name="Asamizu E."/>
            <person name="Nakamura Y."/>
            <person name="Miyajima N."/>
            <person name="Hirosawa M."/>
            <person name="Sugiura M."/>
            <person name="Sasamoto S."/>
            <person name="Kimura T."/>
            <person name="Hosouchi T."/>
            <person name="Matsuno A."/>
            <person name="Muraki A."/>
            <person name="Nakazaki N."/>
            <person name="Naruo K."/>
            <person name="Okumura S."/>
            <person name="Shimpo S."/>
            <person name="Takeuchi C."/>
            <person name="Wada T."/>
            <person name="Watanabe A."/>
            <person name="Yamada M."/>
            <person name="Yasuda M."/>
            <person name="Tabata S."/>
        </authorList>
    </citation>
    <scope>NUCLEOTIDE SEQUENCE [LARGE SCALE GENOMIC DNA]</scope>
    <source>
        <strain>ATCC 27184 / PCC 6803 / Kazusa</strain>
    </source>
</reference>
<reference key="2">
    <citation type="journal article" date="1989" name="J. Biol. Chem.">
        <title>Structure and targeted mutagenesis of the gene encoding 8-kDa subunit of photosystem I from the cyanobacterium Synechocystis sp. PCC 6803.</title>
        <authorList>
            <person name="Chitnis P.R."/>
            <person name="Reilly P.A."/>
            <person name="Miedel M.C."/>
            <person name="Nelson N."/>
        </authorList>
    </citation>
    <scope>NUCLEOTIDE SEQUENCE [GENOMIC DNA] OF 1-169</scope>
</reference>
<dbReference type="EC" id="3.2.2.23"/>
<dbReference type="EC" id="4.2.99.18"/>
<dbReference type="EMBL" id="BA000022">
    <property type="protein sequence ID" value="BAA18384.1"/>
    <property type="molecule type" value="Genomic_DNA"/>
</dbReference>
<dbReference type="EMBL" id="J05079">
    <property type="protein sequence ID" value="AAA88630.1"/>
    <property type="status" value="ALT_FRAME"/>
    <property type="molecule type" value="Genomic_DNA"/>
</dbReference>
<dbReference type="PIR" id="S75925">
    <property type="entry name" value="S75925"/>
</dbReference>
<dbReference type="SMR" id="P74290"/>
<dbReference type="FunCoup" id="P74290">
    <property type="interactions" value="318"/>
</dbReference>
<dbReference type="STRING" id="1148.gene:10499260"/>
<dbReference type="PaxDb" id="1148-1653470"/>
<dbReference type="EnsemblBacteria" id="BAA18384">
    <property type="protein sequence ID" value="BAA18384"/>
    <property type="gene ID" value="BAA18384"/>
</dbReference>
<dbReference type="KEGG" id="syn:slr1689"/>
<dbReference type="eggNOG" id="COG0266">
    <property type="taxonomic scope" value="Bacteria"/>
</dbReference>
<dbReference type="InParanoid" id="P74290"/>
<dbReference type="PhylomeDB" id="P74290"/>
<dbReference type="Proteomes" id="UP000001425">
    <property type="component" value="Chromosome"/>
</dbReference>
<dbReference type="GO" id="GO:0034039">
    <property type="term" value="F:8-oxo-7,8-dihydroguanine DNA N-glycosylase activity"/>
    <property type="evidence" value="ECO:0000318"/>
    <property type="project" value="GO_Central"/>
</dbReference>
<dbReference type="GO" id="GO:0140078">
    <property type="term" value="F:class I DNA-(apurinic or apyrimidinic site) endonuclease activity"/>
    <property type="evidence" value="ECO:0007669"/>
    <property type="project" value="UniProtKB-EC"/>
</dbReference>
<dbReference type="GO" id="GO:0003684">
    <property type="term" value="F:damaged DNA binding"/>
    <property type="evidence" value="ECO:0007669"/>
    <property type="project" value="InterPro"/>
</dbReference>
<dbReference type="GO" id="GO:0003906">
    <property type="term" value="F:DNA-(apurinic or apyrimidinic site) endonuclease activity"/>
    <property type="evidence" value="ECO:0000318"/>
    <property type="project" value="GO_Central"/>
</dbReference>
<dbReference type="GO" id="GO:0008270">
    <property type="term" value="F:zinc ion binding"/>
    <property type="evidence" value="ECO:0007669"/>
    <property type="project" value="UniProtKB-UniRule"/>
</dbReference>
<dbReference type="GO" id="GO:0006284">
    <property type="term" value="P:base-excision repair"/>
    <property type="evidence" value="ECO:0000318"/>
    <property type="project" value="GO_Central"/>
</dbReference>
<dbReference type="CDD" id="cd08966">
    <property type="entry name" value="EcFpg-like_N"/>
    <property type="match status" value="1"/>
</dbReference>
<dbReference type="FunFam" id="1.10.8.50:FF:000003">
    <property type="entry name" value="Formamidopyrimidine-DNA glycosylase"/>
    <property type="match status" value="1"/>
</dbReference>
<dbReference type="FunFam" id="3.20.190.10:FF:000014">
    <property type="entry name" value="Formamidopyrimidine-DNA glycosylase"/>
    <property type="match status" value="1"/>
</dbReference>
<dbReference type="Gene3D" id="1.10.8.50">
    <property type="match status" value="1"/>
</dbReference>
<dbReference type="Gene3D" id="3.20.190.10">
    <property type="entry name" value="MutM-like, N-terminal"/>
    <property type="match status" value="1"/>
</dbReference>
<dbReference type="HAMAP" id="MF_00103">
    <property type="entry name" value="Fapy_DNA_glycosyl"/>
    <property type="match status" value="1"/>
</dbReference>
<dbReference type="InterPro" id="IPR015886">
    <property type="entry name" value="DNA_glyclase/AP_lyase_DNA-bd"/>
</dbReference>
<dbReference type="InterPro" id="IPR015887">
    <property type="entry name" value="DNA_glyclase_Znf_dom_DNA_BS"/>
</dbReference>
<dbReference type="InterPro" id="IPR020629">
    <property type="entry name" value="Formamido-pyr_DNA_Glyclase"/>
</dbReference>
<dbReference type="InterPro" id="IPR012319">
    <property type="entry name" value="FPG_cat"/>
</dbReference>
<dbReference type="InterPro" id="IPR035937">
    <property type="entry name" value="MutM-like_N-ter"/>
</dbReference>
<dbReference type="InterPro" id="IPR010979">
    <property type="entry name" value="Ribosomal_uS13-like_H2TH"/>
</dbReference>
<dbReference type="InterPro" id="IPR000214">
    <property type="entry name" value="Znf_DNA_glyclase/AP_lyase"/>
</dbReference>
<dbReference type="InterPro" id="IPR010663">
    <property type="entry name" value="Znf_FPG/IleRS"/>
</dbReference>
<dbReference type="NCBIfam" id="TIGR00577">
    <property type="entry name" value="fpg"/>
    <property type="match status" value="1"/>
</dbReference>
<dbReference type="NCBIfam" id="NF002211">
    <property type="entry name" value="PRK01103.1"/>
    <property type="match status" value="1"/>
</dbReference>
<dbReference type="NCBIfam" id="NF010551">
    <property type="entry name" value="PRK13945.1"/>
    <property type="match status" value="1"/>
</dbReference>
<dbReference type="PANTHER" id="PTHR22993">
    <property type="entry name" value="FORMAMIDOPYRIMIDINE-DNA GLYCOSYLASE"/>
    <property type="match status" value="1"/>
</dbReference>
<dbReference type="PANTHER" id="PTHR22993:SF9">
    <property type="entry name" value="FORMAMIDOPYRIMIDINE-DNA GLYCOSYLASE"/>
    <property type="match status" value="1"/>
</dbReference>
<dbReference type="Pfam" id="PF01149">
    <property type="entry name" value="Fapy_DNA_glyco"/>
    <property type="match status" value="1"/>
</dbReference>
<dbReference type="Pfam" id="PF06831">
    <property type="entry name" value="H2TH"/>
    <property type="match status" value="1"/>
</dbReference>
<dbReference type="Pfam" id="PF06827">
    <property type="entry name" value="zf-FPG_IleRS"/>
    <property type="match status" value="1"/>
</dbReference>
<dbReference type="SMART" id="SM00898">
    <property type="entry name" value="Fapy_DNA_glyco"/>
    <property type="match status" value="1"/>
</dbReference>
<dbReference type="SMART" id="SM01232">
    <property type="entry name" value="H2TH"/>
    <property type="match status" value="1"/>
</dbReference>
<dbReference type="SUPFAM" id="SSF57716">
    <property type="entry name" value="Glucocorticoid receptor-like (DNA-binding domain)"/>
    <property type="match status" value="1"/>
</dbReference>
<dbReference type="SUPFAM" id="SSF81624">
    <property type="entry name" value="N-terminal domain of MutM-like DNA repair proteins"/>
    <property type="match status" value="1"/>
</dbReference>
<dbReference type="SUPFAM" id="SSF46946">
    <property type="entry name" value="S13-like H2TH domain"/>
    <property type="match status" value="1"/>
</dbReference>
<dbReference type="PROSITE" id="PS51068">
    <property type="entry name" value="FPG_CAT"/>
    <property type="match status" value="1"/>
</dbReference>
<dbReference type="PROSITE" id="PS01242">
    <property type="entry name" value="ZF_FPG_1"/>
    <property type="match status" value="1"/>
</dbReference>
<dbReference type="PROSITE" id="PS51066">
    <property type="entry name" value="ZF_FPG_2"/>
    <property type="match status" value="1"/>
</dbReference>
<gene>
    <name type="primary">mutM</name>
    <name type="synonym">fpg</name>
    <name type="ordered locus">slr1689</name>
</gene>
<organism>
    <name type="scientific">Synechocystis sp. (strain ATCC 27184 / PCC 6803 / Kazusa)</name>
    <dbReference type="NCBI Taxonomy" id="1111708"/>
    <lineage>
        <taxon>Bacteria</taxon>
        <taxon>Bacillati</taxon>
        <taxon>Cyanobacteriota</taxon>
        <taxon>Cyanophyceae</taxon>
        <taxon>Synechococcales</taxon>
        <taxon>Merismopediaceae</taxon>
        <taxon>Synechocystis</taxon>
    </lineage>
</organism>